<reference key="1">
    <citation type="journal article" date="2001" name="Mol. Biol. Evol.">
        <title>Pseudogenes, junk DNA, and the dynamics of Rickettsia genomes.</title>
        <authorList>
            <person name="Andersson J.O."/>
            <person name="Andersson S.G.E."/>
        </authorList>
    </citation>
    <scope>NUCLEOTIDE SEQUENCE [GENOMIC DNA]</scope>
    <source>
        <strain>ATCC VR-144 / Wilmington</strain>
    </source>
</reference>
<reference key="2">
    <citation type="journal article" date="2004" name="J. Bacteriol.">
        <title>Complete genome sequence of Rickettsia typhi and comparison with sequences of other Rickettsiae.</title>
        <authorList>
            <person name="McLeod M.P."/>
            <person name="Qin X."/>
            <person name="Karpathy S.E."/>
            <person name="Gioia J."/>
            <person name="Highlander S.K."/>
            <person name="Fox G.E."/>
            <person name="McNeill T.Z."/>
            <person name="Jiang H."/>
            <person name="Muzny D."/>
            <person name="Jacob L.S."/>
            <person name="Hawes A.C."/>
            <person name="Sodergren E."/>
            <person name="Gill R."/>
            <person name="Hume J."/>
            <person name="Morgan M."/>
            <person name="Fan G."/>
            <person name="Amin A.G."/>
            <person name="Gibbs R.A."/>
            <person name="Hong C."/>
            <person name="Yu X.-J."/>
            <person name="Walker D.H."/>
            <person name="Weinstock G.M."/>
        </authorList>
    </citation>
    <scope>NUCLEOTIDE SEQUENCE [LARGE SCALE GENOMIC DNA]</scope>
    <source>
        <strain>ATCC VR-144 / Wilmington</strain>
    </source>
</reference>
<gene>
    <name type="ordered locus">RT0703</name>
</gene>
<name>HLP_RICTY</name>
<sequence>MTITKNKISLMLNSKLGFSNNLCEEIVNTVFSNILEIAKVQKLTLKNFGSFEVKQKKQRPGINFHTKSPVMIASKKNLRFSPSEKLKALINKSMR</sequence>
<keyword id="KW-0238">DNA-binding</keyword>
<dbReference type="EMBL" id="AJ293328">
    <property type="protein sequence ID" value="CAC33761.1"/>
    <property type="molecule type" value="Genomic_DNA"/>
</dbReference>
<dbReference type="EMBL" id="AE017197">
    <property type="protein sequence ID" value="AAU04162.1"/>
    <property type="molecule type" value="Genomic_DNA"/>
</dbReference>
<dbReference type="RefSeq" id="WP_011191139.1">
    <property type="nucleotide sequence ID" value="NC_006142.1"/>
</dbReference>
<dbReference type="SMR" id="Q9AKA7"/>
<dbReference type="KEGG" id="rty:RT0703"/>
<dbReference type="eggNOG" id="COG0776">
    <property type="taxonomic scope" value="Bacteria"/>
</dbReference>
<dbReference type="HOGENOM" id="CLU_105066_1_2_5"/>
<dbReference type="OrthoDB" id="9804203at2"/>
<dbReference type="Proteomes" id="UP000000604">
    <property type="component" value="Chromosome"/>
</dbReference>
<dbReference type="GO" id="GO:0005829">
    <property type="term" value="C:cytosol"/>
    <property type="evidence" value="ECO:0007669"/>
    <property type="project" value="TreeGrafter"/>
</dbReference>
<dbReference type="GO" id="GO:0003677">
    <property type="term" value="F:DNA binding"/>
    <property type="evidence" value="ECO:0007669"/>
    <property type="project" value="UniProtKB-KW"/>
</dbReference>
<dbReference type="GO" id="GO:0030527">
    <property type="term" value="F:structural constituent of chromatin"/>
    <property type="evidence" value="ECO:0007669"/>
    <property type="project" value="InterPro"/>
</dbReference>
<dbReference type="Gene3D" id="4.10.520.10">
    <property type="entry name" value="IHF-like DNA-binding proteins"/>
    <property type="match status" value="1"/>
</dbReference>
<dbReference type="InterPro" id="IPR000119">
    <property type="entry name" value="Hist_DNA-bd"/>
</dbReference>
<dbReference type="InterPro" id="IPR010992">
    <property type="entry name" value="IHF-like_DNA-bd_dom_sf"/>
</dbReference>
<dbReference type="PANTHER" id="PTHR33175">
    <property type="entry name" value="DNA-BINDING PROTEIN HU"/>
    <property type="match status" value="1"/>
</dbReference>
<dbReference type="PANTHER" id="PTHR33175:SF2">
    <property type="entry name" value="INTEGRATION HOST FACTOR SUBUNIT ALPHA"/>
    <property type="match status" value="1"/>
</dbReference>
<dbReference type="Pfam" id="PF00216">
    <property type="entry name" value="Bac_DNA_binding"/>
    <property type="match status" value="1"/>
</dbReference>
<dbReference type="SMART" id="SM00411">
    <property type="entry name" value="BHL"/>
    <property type="match status" value="1"/>
</dbReference>
<dbReference type="SUPFAM" id="SSF47729">
    <property type="entry name" value="IHF-like DNA-binding proteins"/>
    <property type="match status" value="1"/>
</dbReference>
<accession>Q9AKA7</accession>
<feature type="chain" id="PRO_0000280390" description="Histone-like DNA-binding protein">
    <location>
        <begin position="1"/>
        <end position="95"/>
    </location>
</feature>
<organism>
    <name type="scientific">Rickettsia typhi (strain ATCC VR-144 / Wilmington)</name>
    <dbReference type="NCBI Taxonomy" id="257363"/>
    <lineage>
        <taxon>Bacteria</taxon>
        <taxon>Pseudomonadati</taxon>
        <taxon>Pseudomonadota</taxon>
        <taxon>Alphaproteobacteria</taxon>
        <taxon>Rickettsiales</taxon>
        <taxon>Rickettsiaceae</taxon>
        <taxon>Rickettsieae</taxon>
        <taxon>Rickettsia</taxon>
        <taxon>typhus group</taxon>
    </lineage>
</organism>
<comment type="similarity">
    <text evidence="1">Belongs to the bacterial histone-like protein family.</text>
</comment>
<proteinExistence type="inferred from homology"/>
<evidence type="ECO:0000305" key="1"/>
<protein>
    <recommendedName>
        <fullName>Histone-like DNA-binding protein</fullName>
    </recommendedName>
</protein>